<organism>
    <name type="scientific">Rattus norvegicus</name>
    <name type="common">Rat</name>
    <dbReference type="NCBI Taxonomy" id="10116"/>
    <lineage>
        <taxon>Eukaryota</taxon>
        <taxon>Metazoa</taxon>
        <taxon>Chordata</taxon>
        <taxon>Craniata</taxon>
        <taxon>Vertebrata</taxon>
        <taxon>Euteleostomi</taxon>
        <taxon>Mammalia</taxon>
        <taxon>Eutheria</taxon>
        <taxon>Euarchontoglires</taxon>
        <taxon>Glires</taxon>
        <taxon>Rodentia</taxon>
        <taxon>Myomorpha</taxon>
        <taxon>Muroidea</taxon>
        <taxon>Muridae</taxon>
        <taxon>Murinae</taxon>
        <taxon>Rattus</taxon>
    </lineage>
</organism>
<accession>P43144</accession>
<accession>Q6PW49</accession>
<gene>
    <name type="primary">Chrna9</name>
    <name type="synonym">Acra9</name>
</gene>
<evidence type="ECO:0000250" key="1">
    <source>
        <dbReference type="UniProtKB" id="Q9UGM1"/>
    </source>
</evidence>
<evidence type="ECO:0000255" key="2"/>
<evidence type="ECO:0000269" key="3">
    <source>
    </source>
</evidence>
<evidence type="ECO:0000269" key="4">
    <source>
    </source>
</evidence>
<evidence type="ECO:0000269" key="5">
    <source>
    </source>
</evidence>
<evidence type="ECO:0000269" key="6">
    <source>
    </source>
</evidence>
<evidence type="ECO:0000269" key="7">
    <source>
    </source>
</evidence>
<evidence type="ECO:0000269" key="8">
    <source>
    </source>
</evidence>
<evidence type="ECO:0000269" key="9">
    <source>
    </source>
</evidence>
<evidence type="ECO:0000269" key="10">
    <source>
    </source>
</evidence>
<evidence type="ECO:0000269" key="11">
    <source>
    </source>
</evidence>
<evidence type="ECO:0000269" key="12">
    <source>
    </source>
</evidence>
<evidence type="ECO:0000305" key="13"/>
<reference key="1">
    <citation type="journal article" date="1994" name="Cell">
        <title>Alpha 9: an acetylcholine receptor with novel pharmacological properties expressed in rat cochlear hair cells.</title>
        <authorList>
            <person name="Elgoyhen A.B."/>
            <person name="Johnson D.S."/>
            <person name="Boulter J."/>
            <person name="Vetter D.E."/>
            <person name="Heinemann S.F."/>
        </authorList>
    </citation>
    <scope>NUCLEOTIDE SEQUENCE [MRNA]</scope>
    <scope>FUNCTION</scope>
    <scope>SUBCELLULAR LOCATION</scope>
    <scope>TISSUE SPECIFICITY</scope>
    <source>
        <tissue>Olfactory epithelium</tissue>
    </source>
</reference>
<reference key="2">
    <citation type="submission" date="2004-03" db="EMBL/GenBank/DDBJ databases">
        <authorList>
            <person name="Groot-Kormelink P.J."/>
        </authorList>
    </citation>
    <scope>NUCLEOTIDE SEQUENCE [MRNA]</scope>
    <source>
        <strain>Sprague-Dawley</strain>
        <tissue>Brain</tissue>
    </source>
</reference>
<reference key="3">
    <citation type="journal article" date="2000" name="Hear. Res.">
        <title>High calcium permeability and calcium block of the alpha9 nicotinic acetylcholine receptor.</title>
        <authorList>
            <person name="Katz E."/>
            <person name="Verbitsky M."/>
            <person name="Rothlin C.V."/>
            <person name="Vetter D.E."/>
            <person name="Heinemann S.F."/>
            <person name="Elgoyhen A.B."/>
        </authorList>
    </citation>
    <scope>FUNCTION</scope>
    <scope>SUBCELLULAR LOCATION</scope>
    <scope>ACTIVITY REGULATION</scope>
</reference>
<reference key="4">
    <citation type="journal article" date="2000" name="Neuropharmacology">
        <title>Mixed nicotinic-muscarinic properties of the alpha9 nicotinic cholinergic receptor.</title>
        <authorList>
            <person name="Verbitsky M."/>
            <person name="Rothlin C.V."/>
            <person name="Katz E."/>
            <person name="Elgoyhen A.B."/>
        </authorList>
    </citation>
    <scope>FUNCTION</scope>
</reference>
<reference key="5">
    <citation type="journal article" date="2001" name="Proc. Natl. Acad. Sci. U.S.A.">
        <title>Alpha10: a determinant of nicotinic cholinergic receptor function in mammalian vestibular and cochlear mechanosensory hair cells.</title>
        <authorList>
            <person name="Elgoyhen A.B."/>
            <person name="Vetter D.E."/>
            <person name="Katz E."/>
            <person name="Rothlin C.V."/>
            <person name="Heinemann S.F."/>
            <person name="Boulter J."/>
        </authorList>
    </citation>
    <scope>INTERACTION WITH CHRNA10</scope>
    <scope>SUBUNIT</scope>
    <scope>TISSUE SPECIFICITY</scope>
    <scope>FUNCTION</scope>
    <scope>SUBCELLULAR LOCATION</scope>
</reference>
<reference key="6">
    <citation type="journal article" date="2002" name="Hear. Res.">
        <title>The alpha9alpha10 nicotinic acetylcholine receptor is permeable to and is modulated by divalent cations.</title>
        <authorList>
            <person name="Weisstaub N."/>
            <person name="Vetter D.E."/>
            <person name="Elgoyhen A.B."/>
            <person name="Katz E."/>
        </authorList>
    </citation>
    <scope>FUNCTION</scope>
    <scope>SUBCELLULAR LOCATION</scope>
    <scope>INTERACTION WITH CHRNA10</scope>
    <scope>CATALYTIC ACTIVITY</scope>
    <scope>ACTIVITY REGULATION</scope>
</reference>
<reference key="7">
    <citation type="journal article" date="2002" name="Neuroscience">
        <title>Coexpression of alpha 9 and alpha 10 nicotinic acetylcholine receptors in rat dorsal root ganglion neurons.</title>
        <authorList>
            <person name="Lips K.S."/>
            <person name="Pfeil U."/>
            <person name="Kummer W."/>
        </authorList>
    </citation>
    <scope>TISSUE SPECIFICITY</scope>
</reference>
<reference key="8">
    <citation type="journal article" date="2004" name="Mol. Pharmacol.">
        <title>Pharmacological properties of alpha 9 alpha 10 nicotinic acetylcholine receptors revealed by heterologous expression of subunit chimeras.</title>
        <authorList>
            <person name="Baker E.R."/>
            <person name="Zwart R."/>
            <person name="Sher E."/>
            <person name="Millar N.S."/>
        </authorList>
    </citation>
    <scope>FUNCTION</scope>
    <scope>INTERACTION WITH CHRNA10</scope>
</reference>
<reference key="9">
    <citation type="journal article" date="2005" name="J. Neurosci.">
        <title>Stoichiometry of the alpha9alpha10 nicotinic cholinergic receptor.</title>
        <authorList>
            <person name="Plazas P.V."/>
            <person name="Katz E."/>
            <person name="Gomez-Casati M.E."/>
            <person name="Bouzat C."/>
            <person name="Elgoyhen A.B."/>
        </authorList>
    </citation>
    <scope>FUNCTION</scope>
    <scope>SUBUNIT</scope>
    <scope>STOICHIOMETRY</scope>
    <scope>ACTIVITY REGULATION</scope>
</reference>
<reference key="10">
    <citation type="journal article" date="2012" name="J. Neurochem.">
        <title>Molecular basis for the differential sensitivity of rat and human alpha9alpha10 nAChRs to alpha-conotoxin RgIA.</title>
        <authorList>
            <person name="Azam L."/>
            <person name="McIntosh J.M."/>
        </authorList>
    </citation>
    <scope>SITE THR-86</scope>
    <scope>MUTAGENESIS OF SER-36; SER-44; ALA-54; THR-86; ARG-101; SER-147 AND SER-166</scope>
</reference>
<reference key="11">
    <citation type="journal article" date="2008" name="J. Mol. Biol.">
        <title>Alpha-RgIA, a novel conotoxin that blocks the alpha9alpha10 nAChR: structure and identification of key receptor-binding residues.</title>
        <authorList>
            <person name="Ellison M."/>
            <person name="Feng Z.P."/>
            <person name="Park A.J."/>
            <person name="Zhang X."/>
            <person name="Olivera B.M."/>
            <person name="McIntosh J.M."/>
            <person name="Norton R.S."/>
        </authorList>
    </citation>
    <scope>MUTAGENESIS OF TRP-176</scope>
</reference>
<reference key="12">
    <citation type="journal article" date="2015" name="Mol. Pharmacol.">
        <title>Molecular interaction of alpha-conotoxin RgIA with the rat alpha9alpha10 nicotinic acetylcholine receptor.</title>
        <authorList>
            <person name="Azam L."/>
            <person name="Papakyriakou A."/>
            <person name="Zouridakis M."/>
            <person name="Giastas P."/>
            <person name="Tzartos S.J."/>
            <person name="McIntosh J.M."/>
        </authorList>
    </citation>
    <scope>SITE ASP-146</scope>
    <scope>MUTAGENESIS OF THR-86 AND ASP-146</scope>
    <scope>SUBUNIT</scope>
</reference>
<reference key="13">
    <citation type="journal article" date="2016" name="Mol. Pharmacol.">
        <title>Corrections to 'Molecular interaction of alpha-conotoxin RgIA with the rat alpha9alpha10 nicotinic acetylcholine receptor'.</title>
        <authorList>
            <person name="Azam L."/>
            <person name="Papakyriakou A."/>
            <person name="Zouridakis M."/>
            <person name="Giastas P."/>
            <person name="Tzartos S.J."/>
            <person name="McIntosh J.M."/>
        </authorList>
    </citation>
    <scope>ERRATUM OF PUBMED:25740413</scope>
</reference>
<comment type="function">
    <text evidence="1 3 4 5 6 8 12">Component of neuronal acetylcholine receptors (nAChRs) that function as pentameric, ligand-gated cation channels with high calcium permeability among other activities. nAChRs are excitatory neurotrasnmitter receptors formed by a collection of nAChR subunits known to mediate synaptic transmission in the nervous system and the neuromuscular junction. Each nAchR subunit confers differential attributes to channel properties, including activation, deactivation and desensitization kinetics, pH sensitivity, cation permeability, and binding to allosteric modulators (PubMed:7954834). Forms either homopentamers or heteropentamers with CHRNA10. Expressed in the inner ear, in sympathetic neurons and in other non-neuronal cells, such as skin keratinocytes and lymphocytes (PubMed:11044723, PubMed:14742688). nAChR formed by CHRNA9:CHRNA10 mediate central nervous system control of auditory and vestibular sensory processing. The channel is permeable to a range of divalent cations including calcium, the influx of which may activate a potassium current which hyperpolarizes the cell membrane (PubMed:10713500, PubMed:11248107, PubMed:12117536). In the ear, mediates synaptic transmission between efferent olivocochlear fibers and hair cells of the cochlea, this may lead to a reduction in basilar membrane motion, altering the activity of auditory nerve fibers and reducing the range of dynamic hearing. This may protect against acoustic trauma (PubMed:11248107). May also regulate keratinocyte adhesion (By similarity).</text>
</comment>
<comment type="catalytic activity">
    <reaction evidence="3 5 6">
        <text>Ca(2+)(in) = Ca(2+)(out)</text>
        <dbReference type="Rhea" id="RHEA:29671"/>
        <dbReference type="ChEBI" id="CHEBI:29108"/>
    </reaction>
</comment>
<comment type="catalytic activity">
    <reaction evidence="6">
        <text>Mg(2+)(in) = Mg(2+)(out)</text>
        <dbReference type="Rhea" id="RHEA:29827"/>
        <dbReference type="ChEBI" id="CHEBI:18420"/>
    </reaction>
</comment>
<comment type="catalytic activity">
    <reaction evidence="3">
        <text>K(+)(in) = K(+)(out)</text>
        <dbReference type="Rhea" id="RHEA:29463"/>
        <dbReference type="ChEBI" id="CHEBI:29103"/>
    </reaction>
</comment>
<comment type="catalytic activity">
    <reaction evidence="3">
        <text>Na(+)(in) = Na(+)(out)</text>
        <dbReference type="Rhea" id="RHEA:34963"/>
        <dbReference type="ChEBI" id="CHEBI:29101"/>
    </reaction>
</comment>
<comment type="activity regulation">
    <text evidence="3 6 10 11">Activated by a myriad of ligands such as acetylcholine (PubMed:10713500, PubMed:12117536). AChR activity is inhibited by the antagonist alpha-conotoxins RgIA and GeXXA, small disulfide-constrained peptides from cone snails (PubMed:22774872, PubMed:25740413).</text>
</comment>
<comment type="subunit">
    <text evidence="5 6 8 11">Forms homo- or heterooligomeric channels in conjunction with CHRNA10. The native outer hair cell receptor may be composed of CHRNA9:CHRNA10 heterooligomers. Found in the stoichiometric form (CHRNA9)2:(CHRNA10)3 (PubMed:25740413).</text>
</comment>
<comment type="subcellular location">
    <subcellularLocation>
        <location evidence="13">Synaptic cell membrane</location>
        <topology evidence="2">Multi-pass membrane protein</topology>
    </subcellularLocation>
    <subcellularLocation>
        <location evidence="3 5 6 12">Cell membrane</location>
        <topology evidence="2">Multi-pass membrane protein</topology>
    </subcellularLocation>
</comment>
<comment type="tissue specificity">
    <text evidence="5 7 12">Detected in the nasal epithelium, in the outer hair cells of the cochlea, in the pars tuberalis of the hypophysis, and in the developing muscle of the tongue. Also expressed in the neurons of dorsal root ganglia.</text>
</comment>
<comment type="miscellaneous">
    <text evidence="12">The heterooligomeric receptor composed of CHRNA9 and CHRNA10 has an atypical pharmacological profile, binding several non-nicotinic ligands including strychnine (a glycine receptor antagonist) and atropine (a muscarinic acetylcholine receptor antagonist).</text>
</comment>
<comment type="similarity">
    <text evidence="13">Belongs to the ligand-gated ion channel (TC 1.A.9) family. Acetylcholine receptor (TC 1.A.9.1) subfamily. Alpha-9/CHRNA9 sub-subfamily.</text>
</comment>
<name>ACHA9_RAT</name>
<keyword id="KW-0106">Calcium</keyword>
<keyword id="KW-0107">Calcium channel</keyword>
<keyword id="KW-0109">Calcium transport</keyword>
<keyword id="KW-1003">Cell membrane</keyword>
<keyword id="KW-1015">Disulfide bond</keyword>
<keyword id="KW-0325">Glycoprotein</keyword>
<keyword id="KW-0407">Ion channel</keyword>
<keyword id="KW-0406">Ion transport</keyword>
<keyword id="KW-1071">Ligand-gated ion channel</keyword>
<keyword id="KW-0472">Membrane</keyword>
<keyword id="KW-0479">Metal-binding</keyword>
<keyword id="KW-0675">Receptor</keyword>
<keyword id="KW-1185">Reference proteome</keyword>
<keyword id="KW-0732">Signal</keyword>
<keyword id="KW-0915">Sodium</keyword>
<keyword id="KW-0770">Synapse</keyword>
<keyword id="KW-0812">Transmembrane</keyword>
<keyword id="KW-1133">Transmembrane helix</keyword>
<keyword id="KW-0813">Transport</keyword>
<proteinExistence type="evidence at protein level"/>
<protein>
    <recommendedName>
        <fullName>Neuronal acetylcholine receptor subunit alpha-9</fullName>
    </recommendedName>
    <alternativeName>
        <fullName>Nicotinic acetylcholine receptor subunit alpha-9</fullName>
        <shortName>NACHR alpha-9</shortName>
    </alternativeName>
</protein>
<dbReference type="EMBL" id="U12336">
    <property type="protein sequence ID" value="AAA56720.1"/>
    <property type="molecule type" value="mRNA"/>
</dbReference>
<dbReference type="EMBL" id="AY574257">
    <property type="protein sequence ID" value="AAS90353.1"/>
    <property type="molecule type" value="mRNA"/>
</dbReference>
<dbReference type="PIR" id="A55382">
    <property type="entry name" value="A55382"/>
</dbReference>
<dbReference type="RefSeq" id="NP_075219.2">
    <property type="nucleotide sequence ID" value="NM_022930.2"/>
</dbReference>
<dbReference type="SMR" id="P43144"/>
<dbReference type="ComplexPortal" id="CPX-224">
    <property type="entry name" value="Neuronal nicotinic acetylcholine receptor complex, alpha9-alpha10"/>
</dbReference>
<dbReference type="ComplexPortal" id="CPX-228">
    <property type="entry name" value="Neuronal nicotinic acetylcholine receptor complex, alpha9"/>
</dbReference>
<dbReference type="FunCoup" id="P43144">
    <property type="interactions" value="34"/>
</dbReference>
<dbReference type="STRING" id="10116.ENSRNOP00000003382"/>
<dbReference type="BindingDB" id="P43144"/>
<dbReference type="ChEMBL" id="CHEMBL2585"/>
<dbReference type="DrugCentral" id="P43144"/>
<dbReference type="GuidetoPHARMACOLOGY" id="469"/>
<dbReference type="GlyCosmos" id="P43144">
    <property type="glycosylation" value="2 sites, No reported glycans"/>
</dbReference>
<dbReference type="GlyGen" id="P43144">
    <property type="glycosylation" value="2 sites"/>
</dbReference>
<dbReference type="PhosphoSitePlus" id="P43144"/>
<dbReference type="PaxDb" id="10116-ENSRNOP00000003382"/>
<dbReference type="DNASU" id="65024"/>
<dbReference type="GeneID" id="65024"/>
<dbReference type="KEGG" id="rno:65024"/>
<dbReference type="UCSC" id="RGD:621534">
    <property type="organism name" value="rat"/>
</dbReference>
<dbReference type="AGR" id="RGD:621534"/>
<dbReference type="CTD" id="55584"/>
<dbReference type="RGD" id="621534">
    <property type="gene designation" value="Chrna9"/>
</dbReference>
<dbReference type="VEuPathDB" id="HostDB:ENSRNOG00000002484"/>
<dbReference type="eggNOG" id="KOG3645">
    <property type="taxonomic scope" value="Eukaryota"/>
</dbReference>
<dbReference type="HOGENOM" id="CLU_018074_0_0_1"/>
<dbReference type="InParanoid" id="P43144"/>
<dbReference type="PhylomeDB" id="P43144"/>
<dbReference type="TreeFam" id="TF315605"/>
<dbReference type="Reactome" id="R-RNO-629594">
    <property type="pathway name" value="Highly calcium permeable postsynaptic nicotinic acetylcholine receptors"/>
</dbReference>
<dbReference type="PRO" id="PR:P43144"/>
<dbReference type="Proteomes" id="UP000002494">
    <property type="component" value="Chromosome 14"/>
</dbReference>
<dbReference type="Bgee" id="ENSRNOG00000002484">
    <property type="expression patterns" value="Expressed in ovary"/>
</dbReference>
<dbReference type="GO" id="GO:0005892">
    <property type="term" value="C:acetylcholine-gated channel complex"/>
    <property type="evidence" value="ECO:0000314"/>
    <property type="project" value="RGD"/>
</dbReference>
<dbReference type="GO" id="GO:0098981">
    <property type="term" value="C:cholinergic synapse"/>
    <property type="evidence" value="ECO:0000314"/>
    <property type="project" value="SynGO"/>
</dbReference>
<dbReference type="GO" id="GO:0043005">
    <property type="term" value="C:neuron projection"/>
    <property type="evidence" value="ECO:0000318"/>
    <property type="project" value="GO_Central"/>
</dbReference>
<dbReference type="GO" id="GO:0005886">
    <property type="term" value="C:plasma membrane"/>
    <property type="evidence" value="ECO:0000266"/>
    <property type="project" value="RGD"/>
</dbReference>
<dbReference type="GO" id="GO:0099634">
    <property type="term" value="C:postsynaptic specialization membrane"/>
    <property type="evidence" value="ECO:0000314"/>
    <property type="project" value="SynGO"/>
</dbReference>
<dbReference type="GO" id="GO:0045202">
    <property type="term" value="C:synapse"/>
    <property type="evidence" value="ECO:0000318"/>
    <property type="project" value="GO_Central"/>
</dbReference>
<dbReference type="GO" id="GO:1902495">
    <property type="term" value="C:transmembrane transporter complex"/>
    <property type="evidence" value="ECO:0000318"/>
    <property type="project" value="GO_Central"/>
</dbReference>
<dbReference type="GO" id="GO:0022848">
    <property type="term" value="F:acetylcholine-gated monoatomic cation-selective channel activity"/>
    <property type="evidence" value="ECO:0000314"/>
    <property type="project" value="RGD"/>
</dbReference>
<dbReference type="GO" id="GO:0005262">
    <property type="term" value="F:calcium channel activity"/>
    <property type="evidence" value="ECO:0007669"/>
    <property type="project" value="UniProtKB-KW"/>
</dbReference>
<dbReference type="GO" id="GO:0005231">
    <property type="term" value="F:excitatory extracellular ligand-gated monoatomic ion channel activity"/>
    <property type="evidence" value="ECO:0000318"/>
    <property type="project" value="GO_Central"/>
</dbReference>
<dbReference type="GO" id="GO:0022850">
    <property type="term" value="F:serotonin-gated monoatomic cation channel activity"/>
    <property type="evidence" value="ECO:0000318"/>
    <property type="project" value="GO_Central"/>
</dbReference>
<dbReference type="GO" id="GO:1904315">
    <property type="term" value="F:transmitter-gated monoatomic ion channel activity involved in regulation of postsynaptic membrane potential"/>
    <property type="evidence" value="ECO:0000314"/>
    <property type="project" value="SynGO"/>
</dbReference>
<dbReference type="GO" id="GO:0007268">
    <property type="term" value="P:chemical synaptic transmission"/>
    <property type="evidence" value="ECO:0000318"/>
    <property type="project" value="GO_Central"/>
</dbReference>
<dbReference type="GO" id="GO:0050910">
    <property type="term" value="P:detection of mechanical stimulus involved in sensory perception of sound"/>
    <property type="evidence" value="ECO:0000266"/>
    <property type="project" value="RGD"/>
</dbReference>
<dbReference type="GO" id="GO:0042472">
    <property type="term" value="P:inner ear morphogenesis"/>
    <property type="evidence" value="ECO:0000266"/>
    <property type="project" value="RGD"/>
</dbReference>
<dbReference type="GO" id="GO:0051899">
    <property type="term" value="P:membrane depolarization"/>
    <property type="evidence" value="ECO:0007669"/>
    <property type="project" value="Ensembl"/>
</dbReference>
<dbReference type="GO" id="GO:0006812">
    <property type="term" value="P:monoatomic cation transport"/>
    <property type="evidence" value="ECO:0000266"/>
    <property type="project" value="RGD"/>
</dbReference>
<dbReference type="GO" id="GO:0034220">
    <property type="term" value="P:monoatomic ion transmembrane transport"/>
    <property type="evidence" value="ECO:0000318"/>
    <property type="project" value="GO_Central"/>
</dbReference>
<dbReference type="GO" id="GO:0070373">
    <property type="term" value="P:negative regulation of ERK1 and ERK2 cascade"/>
    <property type="evidence" value="ECO:0000315"/>
    <property type="project" value="RGD"/>
</dbReference>
<dbReference type="GO" id="GO:0007204">
    <property type="term" value="P:positive regulation of cytosolic calcium ion concentration"/>
    <property type="evidence" value="ECO:0000266"/>
    <property type="project" value="RGD"/>
</dbReference>
<dbReference type="GO" id="GO:0042391">
    <property type="term" value="P:regulation of membrane potential"/>
    <property type="evidence" value="ECO:0000318"/>
    <property type="project" value="GO_Central"/>
</dbReference>
<dbReference type="GO" id="GO:0010996">
    <property type="term" value="P:response to auditory stimulus"/>
    <property type="evidence" value="ECO:0007669"/>
    <property type="project" value="Ensembl"/>
</dbReference>
<dbReference type="CDD" id="cd19022">
    <property type="entry name" value="LGIC_ECD_nAChR_A9"/>
    <property type="match status" value="1"/>
</dbReference>
<dbReference type="CDD" id="cd19051">
    <property type="entry name" value="LGIC_TM_cation"/>
    <property type="match status" value="1"/>
</dbReference>
<dbReference type="FunFam" id="1.20.58.390:FF:000009">
    <property type="entry name" value="Cholinergic receptor nicotinic alpha 9 subunit"/>
    <property type="match status" value="1"/>
</dbReference>
<dbReference type="FunFam" id="1.20.58.390:FF:000044">
    <property type="entry name" value="neuronal acetylcholine receptor subunit alpha-9"/>
    <property type="match status" value="1"/>
</dbReference>
<dbReference type="FunFam" id="2.70.170.10:FF:000010">
    <property type="entry name" value="neuronal acetylcholine receptor subunit alpha-9"/>
    <property type="match status" value="1"/>
</dbReference>
<dbReference type="Gene3D" id="2.70.170.10">
    <property type="entry name" value="Neurotransmitter-gated ion-channel ligand-binding domain"/>
    <property type="match status" value="1"/>
</dbReference>
<dbReference type="Gene3D" id="1.20.58.390">
    <property type="entry name" value="Neurotransmitter-gated ion-channel transmembrane domain"/>
    <property type="match status" value="2"/>
</dbReference>
<dbReference type="InterPro" id="IPR006202">
    <property type="entry name" value="Neur_chan_lig-bd"/>
</dbReference>
<dbReference type="InterPro" id="IPR036734">
    <property type="entry name" value="Neur_chan_lig-bd_sf"/>
</dbReference>
<dbReference type="InterPro" id="IPR006201">
    <property type="entry name" value="Neur_channel"/>
</dbReference>
<dbReference type="InterPro" id="IPR036719">
    <property type="entry name" value="Neuro-gated_channel_TM_sf"/>
</dbReference>
<dbReference type="InterPro" id="IPR038050">
    <property type="entry name" value="Neuro_actylchol_rec"/>
</dbReference>
<dbReference type="InterPro" id="IPR006029">
    <property type="entry name" value="Neurotrans-gated_channel_TM"/>
</dbReference>
<dbReference type="InterPro" id="IPR018000">
    <property type="entry name" value="Neurotransmitter_ion_chnl_CS"/>
</dbReference>
<dbReference type="InterPro" id="IPR002394">
    <property type="entry name" value="Nicotinic_acetylcholine_rcpt"/>
</dbReference>
<dbReference type="NCBIfam" id="TIGR00860">
    <property type="entry name" value="LIC"/>
    <property type="match status" value="1"/>
</dbReference>
<dbReference type="PANTHER" id="PTHR18945">
    <property type="entry name" value="NEUROTRANSMITTER GATED ION CHANNEL"/>
    <property type="match status" value="1"/>
</dbReference>
<dbReference type="Pfam" id="PF02931">
    <property type="entry name" value="Neur_chan_LBD"/>
    <property type="match status" value="1"/>
</dbReference>
<dbReference type="Pfam" id="PF02932">
    <property type="entry name" value="Neur_chan_memb"/>
    <property type="match status" value="1"/>
</dbReference>
<dbReference type="PRINTS" id="PR00254">
    <property type="entry name" value="NICOTINICR"/>
</dbReference>
<dbReference type="PRINTS" id="PR00252">
    <property type="entry name" value="NRIONCHANNEL"/>
</dbReference>
<dbReference type="SUPFAM" id="SSF90112">
    <property type="entry name" value="Neurotransmitter-gated ion-channel transmembrane pore"/>
    <property type="match status" value="1"/>
</dbReference>
<dbReference type="SUPFAM" id="SSF63712">
    <property type="entry name" value="Nicotinic receptor ligand binding domain-like"/>
    <property type="match status" value="1"/>
</dbReference>
<dbReference type="PROSITE" id="PS00236">
    <property type="entry name" value="NEUROTR_ION_CHANNEL"/>
    <property type="match status" value="1"/>
</dbReference>
<sequence>MNRPHSCLSFCWMYFAASGIRAVETANGKYAQKLFSDLFEDYSSALRPVEDTDAVLNVTLQVTLSQIKDMDERNQILTAYLWIRQTWHDAYLTWDRDQYDRLDSIRIPSDLVWRPDIVLYNKADDESSEPVNTNVVLRYDGLITWDSPAITKSSCVVDVTYFPFDSQQCNLTFGSWTYNGNQVDIFNALDSGDLSDFIEDVEWEVHGMPAVKNVISYGCCSEPYPDVTFTLLLKRRSSFYIVNLLIPCVLISFLAPLSFYLPAASGEKVSLGVTILLAMTVFQLMVAEIMPASENVPLIGKYYIATMALITASTALTIMVMNIHFCGAEARPVPHWAKVVILKYMSRILFVYDVGESCLSPRHSQEPEQVTKVYSKLPESNLKTSRNKDLSRKKEVRKLLKNDLGYQGGIPQNTDSYCARYEALTKNIEYIAKCLKDHKATNSKGSEWKKVAKVIDRFFMWIFFAMVFVMTVLIIARAD</sequence>
<feature type="signal peptide" evidence="2">
    <location>
        <begin position="1"/>
        <end position="25"/>
    </location>
</feature>
<feature type="chain" id="PRO_0000000372" description="Neuronal acetylcholine receptor subunit alpha-9">
    <location>
        <begin position="26"/>
        <end position="479"/>
    </location>
</feature>
<feature type="topological domain" description="Extracellular" evidence="2">
    <location>
        <begin position="26"/>
        <end position="237"/>
    </location>
</feature>
<feature type="transmembrane region" description="Helical" evidence="2">
    <location>
        <begin position="238"/>
        <end position="262"/>
    </location>
</feature>
<feature type="transmembrane region" description="Helical" evidence="2">
    <location>
        <begin position="269"/>
        <end position="287"/>
    </location>
</feature>
<feature type="transmembrane region" description="Helical" evidence="2">
    <location>
        <begin position="302"/>
        <end position="323"/>
    </location>
</feature>
<feature type="topological domain" description="Cytoplasmic" evidence="2">
    <location>
        <begin position="324"/>
        <end position="457"/>
    </location>
</feature>
<feature type="transmembrane region" description="Helical" evidence="2">
    <location>
        <begin position="458"/>
        <end position="476"/>
    </location>
</feature>
<feature type="binding site" evidence="1">
    <location>
        <position position="191"/>
    </location>
    <ligand>
        <name>Na(+)</name>
        <dbReference type="ChEBI" id="CHEBI:29101"/>
    </ligand>
</feature>
<feature type="binding site" evidence="1">
    <location>
        <position position="193"/>
    </location>
    <ligand>
        <name>Na(+)</name>
        <dbReference type="ChEBI" id="CHEBI:29101"/>
    </ligand>
</feature>
<feature type="site" description="Key residue important for potent inhibition of the CHRNA9:CHRNA10 receptor by the alpha-conotoxin RgIA (AC P0C1D0)" evidence="10">
    <location>
        <position position="86"/>
    </location>
</feature>
<feature type="site" description="Key residue important for potent inhibition of the CHRNA9:CHRNA10 receptor by the alpha-conotoxin RgIA (AC P0C1D0)" evidence="11">
    <location>
        <position position="146"/>
    </location>
</feature>
<feature type="glycosylation site" description="N-linked (GlcNAc...) asparagine" evidence="1">
    <location>
        <position position="57"/>
    </location>
</feature>
<feature type="glycosylation site" description="N-linked (GlcNAc...) asparagine" evidence="1">
    <location>
        <position position="170"/>
    </location>
</feature>
<feature type="disulfide bond" evidence="1">
    <location>
        <begin position="155"/>
        <end position="169"/>
    </location>
</feature>
<feature type="disulfide bond" evidence="1">
    <location>
        <begin position="219"/>
        <end position="220"/>
    </location>
</feature>
<feature type="mutagenesis site" description="No significant change in potency of inhibition of the CHRNA9:CHRNA10 receptor by the alpha-conotoxin RgIA." evidence="10">
    <original>S</original>
    <variation>N</variation>
    <location>
        <position position="36"/>
    </location>
</feature>
<feature type="mutagenesis site" description="No significant change in potency of inhibition of the CHRNA9:CHRNA10 receptorby the alpha-conotoxin RgIA." evidence="10">
    <original>S</original>
    <variation>N</variation>
    <location>
        <position position="44"/>
    </location>
</feature>
<feature type="mutagenesis site" description="No significant change in potency of inhibition of the CHRNA9:CHRNA10 receptorby the alpha-conotoxin RgIA." evidence="10">
    <original>A</original>
    <variation>K</variation>
    <location>
        <position position="54"/>
    </location>
</feature>
<feature type="mutagenesis site" description="The CHRNA9:CHRNA10 receptor is 20-fold less potently inhibited by the alpha-conotoxin RgIA." evidence="11">
    <original>T</original>
    <variation>E</variation>
    <location>
        <position position="86"/>
    </location>
</feature>
<feature type="mutagenesis site" description="The CHRNA9:CHRNA10 receptor is 1700-fold less potently inhibited by the alpha-conotoxin RgIA." evidence="10 11">
    <original>T</original>
    <variation>I</variation>
    <location>
        <position position="86"/>
    </location>
</feature>
<feature type="mutagenesis site" description="No significant change in potency of inhibition of the CHRNA9:CHRNA10 receptor by the alpha-conotoxin RgIA." evidence="10">
    <original>R</original>
    <variation>G</variation>
    <location>
        <position position="101"/>
    </location>
</feature>
<feature type="mutagenesis site" description="Complete loss of inhibition of the CHRNA9:CHRNA10 receptor by the alpha-conotoxin RgIA." evidence="11">
    <original>D</original>
    <variation>L</variation>
    <location>
        <position position="146"/>
    </location>
</feature>
<feature type="mutagenesis site" description="No significant change in potency of inhibition of the CHRNA9:CHRNA10 receptor by the alpha-conotoxin RgIA." evidence="10">
    <original>S</original>
    <variation>A</variation>
    <location>
        <position position="147"/>
    </location>
</feature>
<feature type="mutagenesis site" description="No significant change in potency of inhibition of the CHRNA9:CHRNA10 receptor by the alpha-conotoxin RgIA." evidence="10">
    <original>S</original>
    <variation>N</variation>
    <location>
        <position position="166"/>
    </location>
</feature>
<feature type="mutagenesis site" description="The CHRNA9:CHRNA10 receptor is 8.5-fold less potently inhibited by the alpha-conotoxin RgIA." evidence="9">
    <original>W</original>
    <variation>T</variation>
    <location>
        <position position="176"/>
    </location>
</feature>
<feature type="sequence conflict" description="In Ref. 1; AAA56720." evidence="13" ref="1">
    <original>T</original>
    <variation>A</variation>
    <location>
        <position position="425"/>
    </location>
</feature>